<evidence type="ECO:0000255" key="1">
    <source>
        <dbReference type="HAMAP-Rule" id="MF_01159"/>
    </source>
</evidence>
<evidence type="ECO:0000256" key="2">
    <source>
        <dbReference type="SAM" id="MobiDB-lite"/>
    </source>
</evidence>
<evidence type="ECO:0000305" key="3"/>
<comment type="function">
    <text evidence="1">Involved in control of chromosome replication initiation. Inhibits the cooperative binding of DnaA to the oriC region, thus negatively regulating initiation of chromosome replication. Inhibits the ability of DnaA-ATP to form a helix on DNA; does not disassemble preformed DnaA-DNA helices. Decreases the residence time of DnaA on the chromosome at its binding sites (oriC, replication forks and promoter-binding sites). Tethers DnaA to the replication machinery via the DNA polymerase beta sliding clamp subunit (dnaN). Associates with oriC and other DnaA targets on the chromosome in a DnaA-dependent manner.</text>
</comment>
<comment type="cofactor">
    <cofactor evidence="1">
        <name>Zn(2+)</name>
        <dbReference type="ChEBI" id="CHEBI:29105"/>
    </cofactor>
    <text evidence="1">Binds 1 zinc ion per subunit.</text>
</comment>
<comment type="subunit">
    <text evidence="1">Homotetramer. Interacts with both DnaA and DnaN, acting as a bridge between these two proteins.</text>
</comment>
<comment type="subcellular location">
    <subcellularLocation>
        <location evidence="1">Cytoplasm</location>
        <location evidence="1">Nucleoid</location>
    </subcellularLocation>
    <text evidence="1">Localizes in tight foci, which correspond to the replisome at mid-cell throughout the cell cycle.</text>
</comment>
<comment type="similarity">
    <text evidence="1">Belongs to the YabA family.</text>
</comment>
<comment type="sequence caution" evidence="3">
    <conflict type="erroneous initiation">
        <sequence resource="EMBL-CDS" id="AAP07137"/>
    </conflict>
</comment>
<name>YABA_BACCR</name>
<dbReference type="EMBL" id="AE016877">
    <property type="protein sequence ID" value="AAP07137.1"/>
    <property type="status" value="ALT_INIT"/>
    <property type="molecule type" value="Genomic_DNA"/>
</dbReference>
<dbReference type="RefSeq" id="NP_829936.1">
    <property type="nucleotide sequence ID" value="NC_004722.1"/>
</dbReference>
<dbReference type="RefSeq" id="WP_000412063.1">
    <property type="nucleotide sequence ID" value="NZ_CP138336.1"/>
</dbReference>
<dbReference type="SMR" id="Q81JB2"/>
<dbReference type="STRING" id="226900.BC_0039"/>
<dbReference type="GeneID" id="72446834"/>
<dbReference type="KEGG" id="bce:BC0039"/>
<dbReference type="PATRIC" id="fig|226900.8.peg.55"/>
<dbReference type="HOGENOM" id="CLU_157169_0_0_9"/>
<dbReference type="OrthoDB" id="2112130at2"/>
<dbReference type="Proteomes" id="UP000001417">
    <property type="component" value="Chromosome"/>
</dbReference>
<dbReference type="GO" id="GO:0009295">
    <property type="term" value="C:nucleoid"/>
    <property type="evidence" value="ECO:0007669"/>
    <property type="project" value="UniProtKB-SubCell"/>
</dbReference>
<dbReference type="GO" id="GO:0006260">
    <property type="term" value="P:DNA replication"/>
    <property type="evidence" value="ECO:0007669"/>
    <property type="project" value="UniProtKB-UniRule"/>
</dbReference>
<dbReference type="Gene3D" id="1.20.5.1160">
    <property type="entry name" value="Vasodilator-stimulated phosphoprotein"/>
    <property type="match status" value="1"/>
</dbReference>
<dbReference type="HAMAP" id="MF_01159">
    <property type="entry name" value="YabA"/>
    <property type="match status" value="1"/>
</dbReference>
<dbReference type="InterPro" id="IPR010377">
    <property type="entry name" value="YabA"/>
</dbReference>
<dbReference type="NCBIfam" id="NF009644">
    <property type="entry name" value="PRK13169.1-5"/>
    <property type="match status" value="1"/>
</dbReference>
<dbReference type="Pfam" id="PF06156">
    <property type="entry name" value="YabA"/>
    <property type="match status" value="1"/>
</dbReference>
<dbReference type="PIRSF" id="PIRSF021439">
    <property type="entry name" value="DUF972"/>
    <property type="match status" value="1"/>
</dbReference>
<sequence>MEKKDIFESVSSMEEQIGHLYKQLGELKQHLAELLEENQHIKMENNNLRHRFEEVQNKEKQKTQKRKEVKPKTDIGEGYDNLARLYQEGFHICNLHYGSVRKEGDCLFCLSFLNKK</sequence>
<organism>
    <name type="scientific">Bacillus cereus (strain ATCC 14579 / DSM 31 / CCUG 7414 / JCM 2152 / NBRC 15305 / NCIMB 9373 / NCTC 2599 / NRRL B-3711)</name>
    <dbReference type="NCBI Taxonomy" id="226900"/>
    <lineage>
        <taxon>Bacteria</taxon>
        <taxon>Bacillati</taxon>
        <taxon>Bacillota</taxon>
        <taxon>Bacilli</taxon>
        <taxon>Bacillales</taxon>
        <taxon>Bacillaceae</taxon>
        <taxon>Bacillus</taxon>
        <taxon>Bacillus cereus group</taxon>
    </lineage>
</organism>
<feature type="chain" id="PRO_0000211900" description="Replication initiation control protein YabA">
    <location>
        <begin position="1"/>
        <end position="116"/>
    </location>
</feature>
<feature type="region of interest" description="Disordered" evidence="2">
    <location>
        <begin position="52"/>
        <end position="73"/>
    </location>
</feature>
<feature type="compositionally biased region" description="Basic and acidic residues" evidence="2">
    <location>
        <begin position="52"/>
        <end position="62"/>
    </location>
</feature>
<feature type="binding site" evidence="1">
    <location>
        <position position="91"/>
    </location>
    <ligand>
        <name>Zn(2+)</name>
        <dbReference type="ChEBI" id="CHEBI:29105"/>
    </ligand>
</feature>
<feature type="binding site" evidence="1">
    <location>
        <position position="93"/>
    </location>
    <ligand>
        <name>Zn(2+)</name>
        <dbReference type="ChEBI" id="CHEBI:29105"/>
    </ligand>
</feature>
<feature type="binding site" evidence="1">
    <location>
        <position position="106"/>
    </location>
    <ligand>
        <name>Zn(2+)</name>
        <dbReference type="ChEBI" id="CHEBI:29105"/>
    </ligand>
</feature>
<feature type="binding site" evidence="1">
    <location>
        <position position="109"/>
    </location>
    <ligand>
        <name>Zn(2+)</name>
        <dbReference type="ChEBI" id="CHEBI:29105"/>
    </ligand>
</feature>
<accession>Q81JB2</accession>
<protein>
    <recommendedName>
        <fullName evidence="1">Replication initiation control protein YabA</fullName>
    </recommendedName>
</protein>
<reference key="1">
    <citation type="journal article" date="2003" name="Nature">
        <title>Genome sequence of Bacillus cereus and comparative analysis with Bacillus anthracis.</title>
        <authorList>
            <person name="Ivanova N."/>
            <person name="Sorokin A."/>
            <person name="Anderson I."/>
            <person name="Galleron N."/>
            <person name="Candelon B."/>
            <person name="Kapatral V."/>
            <person name="Bhattacharyya A."/>
            <person name="Reznik G."/>
            <person name="Mikhailova N."/>
            <person name="Lapidus A."/>
            <person name="Chu L."/>
            <person name="Mazur M."/>
            <person name="Goltsman E."/>
            <person name="Larsen N."/>
            <person name="D'Souza M."/>
            <person name="Walunas T."/>
            <person name="Grechkin Y."/>
            <person name="Pusch G."/>
            <person name="Haselkorn R."/>
            <person name="Fonstein M."/>
            <person name="Ehrlich S.D."/>
            <person name="Overbeek R."/>
            <person name="Kyrpides N.C."/>
        </authorList>
    </citation>
    <scope>NUCLEOTIDE SEQUENCE [LARGE SCALE GENOMIC DNA]</scope>
    <source>
        <strain>ATCC 14579 / DSM 31 / CCUG 7414 / JCM 2152 / NBRC 15305 / NCIMB 9373 / NCTC 2599 / NRRL B-3711</strain>
    </source>
</reference>
<keyword id="KW-0963">Cytoplasm</keyword>
<keyword id="KW-0235">DNA replication</keyword>
<keyword id="KW-0236">DNA replication inhibitor</keyword>
<keyword id="KW-0479">Metal-binding</keyword>
<keyword id="KW-1185">Reference proteome</keyword>
<keyword id="KW-0862">Zinc</keyword>
<gene>
    <name evidence="1" type="primary">yabA</name>
    <name type="ordered locus">BC_0039</name>
</gene>
<proteinExistence type="inferred from homology"/>